<dbReference type="EC" id="3.6.1.23" evidence="1"/>
<dbReference type="EMBL" id="AY372243">
    <property type="protein sequence ID" value="AAQ73690.1"/>
    <property type="molecule type" value="Genomic_DNA"/>
</dbReference>
<dbReference type="RefSeq" id="NP_944384.1">
    <property type="nucleotide sequence ID" value="NC_005264.1"/>
</dbReference>
<dbReference type="SMR" id="Q6UDM0"/>
<dbReference type="GeneID" id="2656993"/>
<dbReference type="KEGG" id="vg:2656993"/>
<dbReference type="Proteomes" id="UP000006840">
    <property type="component" value="Segment"/>
</dbReference>
<dbReference type="GO" id="GO:0004170">
    <property type="term" value="F:dUTP diphosphatase activity"/>
    <property type="evidence" value="ECO:0007669"/>
    <property type="project" value="UniProtKB-EC"/>
</dbReference>
<dbReference type="GO" id="GO:0046872">
    <property type="term" value="F:metal ion binding"/>
    <property type="evidence" value="ECO:0007669"/>
    <property type="project" value="UniProtKB-KW"/>
</dbReference>
<dbReference type="GO" id="GO:0046080">
    <property type="term" value="P:dUTP metabolic process"/>
    <property type="evidence" value="ECO:0007669"/>
    <property type="project" value="InterPro"/>
</dbReference>
<dbReference type="CDD" id="cd07557">
    <property type="entry name" value="trimeric_dUTPase"/>
    <property type="match status" value="1"/>
</dbReference>
<dbReference type="Gene3D" id="2.70.40.10">
    <property type="match status" value="1"/>
</dbReference>
<dbReference type="HAMAP" id="MF_04031">
    <property type="entry name" value="HSV_DUT"/>
    <property type="match status" value="1"/>
</dbReference>
<dbReference type="InterPro" id="IPR029054">
    <property type="entry name" value="dUTPase-like"/>
</dbReference>
<dbReference type="InterPro" id="IPR036157">
    <property type="entry name" value="dUTPase-like_sf"/>
</dbReference>
<dbReference type="InterPro" id="IPR033704">
    <property type="entry name" value="dUTPase_trimeric"/>
</dbReference>
<dbReference type="InterPro" id="IPR034745">
    <property type="entry name" value="HSV_DUT"/>
</dbReference>
<dbReference type="Pfam" id="PF00692">
    <property type="entry name" value="dUTPase"/>
    <property type="match status" value="1"/>
</dbReference>
<dbReference type="SUPFAM" id="SSF51283">
    <property type="entry name" value="dUTPase-like"/>
    <property type="match status" value="2"/>
</dbReference>
<proteinExistence type="inferred from homology"/>
<feature type="chain" id="PRO_0000406814" description="Deoxyuridine 5'-triphosphate nucleotidohydrolase">
    <location>
        <begin position="1"/>
        <end position="414"/>
    </location>
</feature>
<feature type="binding site" evidence="1">
    <location>
        <begin position="327"/>
        <end position="329"/>
    </location>
    <ligand>
        <name>substrate</name>
    </ligand>
</feature>
<feature type="binding site" evidence="1">
    <location>
        <begin position="409"/>
        <end position="410"/>
    </location>
    <ligand>
        <name>substrate</name>
    </ligand>
</feature>
<evidence type="ECO:0000255" key="1">
    <source>
        <dbReference type="HAMAP-Rule" id="MF_04031"/>
    </source>
</evidence>
<protein>
    <recommendedName>
        <fullName evidence="1">Deoxyuridine 5'-triphosphate nucleotidohydrolase</fullName>
        <shortName evidence="1">dUTPase</shortName>
        <ecNumber evidence="1">3.6.1.23</ecNumber>
    </recommendedName>
    <alternativeName>
        <fullName evidence="1">dUTP pyrophosphatase</fullName>
    </alternativeName>
</protein>
<keyword id="KW-0378">Hydrolase</keyword>
<keyword id="KW-0460">Magnesium</keyword>
<keyword id="KW-0479">Metal-binding</keyword>
<keyword id="KW-0546">Nucleotide metabolism</keyword>
<keyword id="KW-1185">Reference proteome</keyword>
<comment type="function">
    <text evidence="1">Involved in nucleotide metabolism: produces dUMP, the immediate precursor of thymidine nucleotides and decreases the intracellular concentration of dUTP to avoid uracil incorporation into viral DNA.</text>
</comment>
<comment type="catalytic activity">
    <reaction evidence="1">
        <text>dUTP + H2O = dUMP + diphosphate + H(+)</text>
        <dbReference type="Rhea" id="RHEA:10248"/>
        <dbReference type="ChEBI" id="CHEBI:15377"/>
        <dbReference type="ChEBI" id="CHEBI:15378"/>
        <dbReference type="ChEBI" id="CHEBI:33019"/>
        <dbReference type="ChEBI" id="CHEBI:61555"/>
        <dbReference type="ChEBI" id="CHEBI:246422"/>
        <dbReference type="EC" id="3.6.1.23"/>
    </reaction>
</comment>
<comment type="cofactor">
    <cofactor evidence="1">
        <name>Mg(2+)</name>
        <dbReference type="ChEBI" id="CHEBI:18420"/>
    </cofactor>
</comment>
<comment type="similarity">
    <text evidence="1">Belongs to the dUTPase family.</text>
</comment>
<organismHost>
    <name type="scientific">Amazona oratrix</name>
    <name type="common">yellow-headed parrot</name>
    <dbReference type="NCBI Taxonomy" id="152276"/>
</organismHost>
<name>DUT_PSHV1</name>
<reference key="1">
    <citation type="journal article" date="2006" name="J. Virol.">
        <title>Psittacid herpesvirus 1 and infectious laryngotracheitis virus: Comparative genome sequence analysis of two avian alphaherpesviruses.</title>
        <authorList>
            <person name="Thureen D.R."/>
            <person name="Keeler C.L. Jr."/>
        </authorList>
    </citation>
    <scope>NUCLEOTIDE SEQUENCE [LARGE SCALE GENOMIC DNA]</scope>
</reference>
<sequence length="414" mass="44834">MEATTKKMAMIEIGKGWAASCLEARTCVISNEEDIYAEPRADTPVLKLDSTVRTALPPGYGIVISGTARNHKTAWEIVPGLVDSGYTGLLGLLLVPTDETPATGSAGGGIVSFSRGGVHARLTVIKLVPDDIMGACGAGAQRLPLKTAITSFKGDEDLLGNGFDHCMESLASIYPDILHVQLDCPVYFGCTGCKAFYRRLGSCLETRPLNELGSDHIYLRRGSAYESVNRFAAPDDVMFVAMYGKWLLIGMAETPNEKLTVELRDDDSSPAALIPFHDTFGQKEAEDAGYDIRAPENCTLPPGGSVRVILRQKLHMGKGRAAFVMGRSSMNLKGVLVEPERVVDDEWVSFNITNIRDAAAFFRKNDRIAQLVALEDKLELMGGVDALPWRVVQSVQEEKKNSSRGDKGFGSSGV</sequence>
<organism>
    <name type="scientific">Psittacid herpesvirus 1 (isolate Amazon parrot/-/97-0001/1997)</name>
    <name type="common">PsHV-1</name>
    <name type="synonym">Pacheco's disease virus</name>
    <dbReference type="NCBI Taxonomy" id="670426"/>
    <lineage>
        <taxon>Viruses</taxon>
        <taxon>Duplodnaviria</taxon>
        <taxon>Heunggongvirae</taxon>
        <taxon>Peploviricota</taxon>
        <taxon>Herviviricetes</taxon>
        <taxon>Herpesvirales</taxon>
        <taxon>Orthoherpesviridae</taxon>
        <taxon>Alphaherpesvirinae</taxon>
        <taxon>Iltovirus</taxon>
        <taxon>Iltovirus psittacidalpha1</taxon>
        <taxon>Psittacid alphaherpesvirus 1</taxon>
    </lineage>
</organism>
<accession>Q6UDM0</accession>
<gene>
    <name evidence="1" type="primary">DUT</name>
    <name type="ordered locus">UL50</name>
</gene>